<organism>
    <name type="scientific">Mus musculus</name>
    <name type="common">Mouse</name>
    <dbReference type="NCBI Taxonomy" id="10090"/>
    <lineage>
        <taxon>Eukaryota</taxon>
        <taxon>Metazoa</taxon>
        <taxon>Chordata</taxon>
        <taxon>Craniata</taxon>
        <taxon>Vertebrata</taxon>
        <taxon>Euteleostomi</taxon>
        <taxon>Mammalia</taxon>
        <taxon>Eutheria</taxon>
        <taxon>Euarchontoglires</taxon>
        <taxon>Glires</taxon>
        <taxon>Rodentia</taxon>
        <taxon>Myomorpha</taxon>
        <taxon>Muroidea</taxon>
        <taxon>Muridae</taxon>
        <taxon>Murinae</taxon>
        <taxon>Mus</taxon>
        <taxon>Mus</taxon>
    </lineage>
</organism>
<gene>
    <name type="primary">Fbxo32</name>
</gene>
<keyword id="KW-0963">Cytoplasm</keyword>
<keyword id="KW-0539">Nucleus</keyword>
<keyword id="KW-1185">Reference proteome</keyword>
<keyword id="KW-0833">Ubl conjugation pathway</keyword>
<dbReference type="EMBL" id="AF441120">
    <property type="protein sequence ID" value="AAL49563.1"/>
    <property type="molecule type" value="mRNA"/>
</dbReference>
<dbReference type="EMBL" id="AK014793">
    <property type="protein sequence ID" value="BAB29555.1"/>
    <property type="molecule type" value="mRNA"/>
</dbReference>
<dbReference type="EMBL" id="AK014612">
    <property type="protein sequence ID" value="BAB29463.1"/>
    <property type="molecule type" value="mRNA"/>
</dbReference>
<dbReference type="EMBL" id="BC027211">
    <property type="protein sequence ID" value="AAH27211.1"/>
    <property type="molecule type" value="mRNA"/>
</dbReference>
<dbReference type="CCDS" id="CCDS27491.1"/>
<dbReference type="RefSeq" id="NP_080622.1">
    <property type="nucleotide sequence ID" value="NM_026346.3"/>
</dbReference>
<dbReference type="BioGRID" id="212401">
    <property type="interactions" value="158"/>
</dbReference>
<dbReference type="CORUM" id="Q9CPU7"/>
<dbReference type="FunCoup" id="Q9CPU7">
    <property type="interactions" value="1093"/>
</dbReference>
<dbReference type="IntAct" id="Q9CPU7">
    <property type="interactions" value="2"/>
</dbReference>
<dbReference type="MINT" id="Q9CPU7"/>
<dbReference type="STRING" id="10090.ENSMUSP00000022986"/>
<dbReference type="PhosphoSitePlus" id="Q9CPU7"/>
<dbReference type="PaxDb" id="10090-ENSMUSP00000022986"/>
<dbReference type="PeptideAtlas" id="Q9CPU7"/>
<dbReference type="ProteomicsDB" id="272965"/>
<dbReference type="Antibodypedia" id="27004">
    <property type="antibodies" value="333 antibodies from 36 providers"/>
</dbReference>
<dbReference type="DNASU" id="67731"/>
<dbReference type="Ensembl" id="ENSMUST00000022986.8">
    <property type="protein sequence ID" value="ENSMUSP00000022986.7"/>
    <property type="gene ID" value="ENSMUSG00000022358.8"/>
</dbReference>
<dbReference type="GeneID" id="67731"/>
<dbReference type="KEGG" id="mmu:67731"/>
<dbReference type="UCSC" id="uc007vtk.3">
    <property type="organism name" value="mouse"/>
</dbReference>
<dbReference type="AGR" id="MGI:1914981"/>
<dbReference type="CTD" id="114907"/>
<dbReference type="MGI" id="MGI:1914981">
    <property type="gene designation" value="Fbxo32"/>
</dbReference>
<dbReference type="VEuPathDB" id="HostDB:ENSMUSG00000022358"/>
<dbReference type="eggNOG" id="KOG3926">
    <property type="taxonomic scope" value="Eukaryota"/>
</dbReference>
<dbReference type="GeneTree" id="ENSGT00390000004915"/>
<dbReference type="HOGENOM" id="CLU_065667_0_0_1"/>
<dbReference type="InParanoid" id="Q9CPU7"/>
<dbReference type="OMA" id="NINTWVH"/>
<dbReference type="OrthoDB" id="9991467at2759"/>
<dbReference type="PhylomeDB" id="Q9CPU7"/>
<dbReference type="TreeFam" id="TF313070"/>
<dbReference type="Reactome" id="R-MMU-8951664">
    <property type="pathway name" value="Neddylation"/>
</dbReference>
<dbReference type="Reactome" id="R-MMU-983168">
    <property type="pathway name" value="Antigen processing: Ubiquitination &amp; Proteasome degradation"/>
</dbReference>
<dbReference type="UniPathway" id="UPA00143"/>
<dbReference type="BioGRID-ORCS" id="67731">
    <property type="hits" value="1 hit in 80 CRISPR screens"/>
</dbReference>
<dbReference type="ChiTaRS" id="Fbxo32">
    <property type="organism name" value="mouse"/>
</dbReference>
<dbReference type="PRO" id="PR:Q9CPU7"/>
<dbReference type="Proteomes" id="UP000000589">
    <property type="component" value="Chromosome 15"/>
</dbReference>
<dbReference type="RNAct" id="Q9CPU7">
    <property type="molecule type" value="protein"/>
</dbReference>
<dbReference type="Bgee" id="ENSMUSG00000022358">
    <property type="expression patterns" value="Expressed in hindlimb stylopod muscle and 72 other cell types or tissues"/>
</dbReference>
<dbReference type="GO" id="GO:0005829">
    <property type="term" value="C:cytosol"/>
    <property type="evidence" value="ECO:0000304"/>
    <property type="project" value="Reactome"/>
</dbReference>
<dbReference type="GO" id="GO:0005654">
    <property type="term" value="C:nucleoplasm"/>
    <property type="evidence" value="ECO:0007669"/>
    <property type="project" value="Ensembl"/>
</dbReference>
<dbReference type="GO" id="GO:0005634">
    <property type="term" value="C:nucleus"/>
    <property type="evidence" value="ECO:0000314"/>
    <property type="project" value="MGI"/>
</dbReference>
<dbReference type="GO" id="GO:0019005">
    <property type="term" value="C:SCF ubiquitin ligase complex"/>
    <property type="evidence" value="ECO:0007669"/>
    <property type="project" value="Ensembl"/>
</dbReference>
<dbReference type="GO" id="GO:0030018">
    <property type="term" value="C:Z disc"/>
    <property type="evidence" value="ECO:0000314"/>
    <property type="project" value="MGI"/>
</dbReference>
<dbReference type="GO" id="GO:0071549">
    <property type="term" value="P:cellular response to dexamethasone stimulus"/>
    <property type="evidence" value="ECO:0000314"/>
    <property type="project" value="MGI"/>
</dbReference>
<dbReference type="GO" id="GO:0016567">
    <property type="term" value="P:protein ubiquitination"/>
    <property type="evidence" value="ECO:0000250"/>
    <property type="project" value="UniProtKB"/>
</dbReference>
<dbReference type="GO" id="GO:0014894">
    <property type="term" value="P:response to denervation involved in regulation of muscle adaptation"/>
    <property type="evidence" value="ECO:0000314"/>
    <property type="project" value="UniProtKB"/>
</dbReference>
<dbReference type="CDD" id="cd22103">
    <property type="entry name" value="F-box_FBXO32"/>
    <property type="match status" value="1"/>
</dbReference>
<dbReference type="FunFam" id="1.20.1280.50:FF:000017">
    <property type="entry name" value="F-box only protein 32"/>
    <property type="match status" value="1"/>
</dbReference>
<dbReference type="Gene3D" id="1.20.1280.50">
    <property type="match status" value="1"/>
</dbReference>
<dbReference type="InterPro" id="IPR036047">
    <property type="entry name" value="F-box-like_dom_sf"/>
</dbReference>
<dbReference type="InterPro" id="IPR040394">
    <property type="entry name" value="FBX25/32"/>
</dbReference>
<dbReference type="PANTHER" id="PTHR13123:SF6">
    <property type="entry name" value="F-BOX ONLY PROTEIN 32"/>
    <property type="match status" value="1"/>
</dbReference>
<dbReference type="PANTHER" id="PTHR13123">
    <property type="entry name" value="LD30288P"/>
    <property type="match status" value="1"/>
</dbReference>
<dbReference type="SUPFAM" id="SSF81383">
    <property type="entry name" value="F-box domain"/>
    <property type="match status" value="1"/>
</dbReference>
<feature type="chain" id="PRO_0000119923" description="F-box only protein 32">
    <location>
        <begin position="1"/>
        <end position="355"/>
    </location>
</feature>
<feature type="domain" description="F-box">
    <location>
        <begin position="223"/>
        <end position="271"/>
    </location>
</feature>
<feature type="short sequence motif" description="Nuclear localization signal" evidence="1">
    <location>
        <begin position="62"/>
        <end position="67"/>
    </location>
</feature>
<feature type="short sequence motif" description="Nuclear export signal" evidence="1">
    <location>
        <begin position="169"/>
        <end position="173"/>
    </location>
</feature>
<feature type="short sequence motif" description="Bipartite nuclear localization signal" evidence="1">
    <location>
        <begin position="280"/>
        <end position="295"/>
    </location>
</feature>
<comment type="function">
    <text evidence="1">Substrate recognition component of a SCF (SKP1-CUL1-F-box protein) E3 ubiquitin-protein ligase complex which mediates the ubiquitination and subsequent proteasomal degradation of target proteins. Probably recognizes and binds to phosphorylated target proteins during skeletal muscle atrophy. Recognizes TERF1 (By similarity).</text>
</comment>
<comment type="pathway">
    <text>Protein modification; protein ubiquitination.</text>
</comment>
<comment type="subunit">
    <text evidence="2">Part of the SCF (SKP1-CUL1-F-box) E3 ubiquitin-protein ligase complex SCF(FBXO32) formed of CUL1, SKP1, RBX1 and FBXO32.</text>
</comment>
<comment type="subcellular location">
    <subcellularLocation>
        <location evidence="2">Cytoplasm</location>
    </subcellularLocation>
    <subcellularLocation>
        <location evidence="2">Nucleus</location>
    </subcellularLocation>
    <text evidence="2">Shuttles between cytoplasm and the nucleus.</text>
</comment>
<comment type="tissue specificity">
    <text>Specifically expressed in cardiac and skeletal muscle.</text>
</comment>
<accession>Q9CPU7</accession>
<protein>
    <recommendedName>
        <fullName>F-box only protein 32</fullName>
    </recommendedName>
    <alternativeName>
        <fullName>Atrogin-1</fullName>
    </alternativeName>
    <alternativeName>
        <fullName>Muscle atrophy F-box protein</fullName>
        <shortName>MAFbx</shortName>
    </alternativeName>
</protein>
<reference key="1">
    <citation type="journal article" date="2001" name="Proc. Natl. Acad. Sci. U.S.A.">
        <title>Atrogin-1, a muscle-specific F-box protein highly expressed during muscle atrophy.</title>
        <authorList>
            <person name="Gomes M.D."/>
            <person name="Lecker S.H."/>
            <person name="Jagoe R.T."/>
            <person name="Navon A."/>
            <person name="Goldberg A.L."/>
        </authorList>
    </citation>
    <scope>NUCLEOTIDE SEQUENCE [MRNA]</scope>
    <source>
        <strain>C57BL/6J</strain>
    </source>
</reference>
<reference key="2">
    <citation type="journal article" date="2005" name="Science">
        <title>The transcriptional landscape of the mammalian genome.</title>
        <authorList>
            <person name="Carninci P."/>
            <person name="Kasukawa T."/>
            <person name="Katayama S."/>
            <person name="Gough J."/>
            <person name="Frith M.C."/>
            <person name="Maeda N."/>
            <person name="Oyama R."/>
            <person name="Ravasi T."/>
            <person name="Lenhard B."/>
            <person name="Wells C."/>
            <person name="Kodzius R."/>
            <person name="Shimokawa K."/>
            <person name="Bajic V.B."/>
            <person name="Brenner S.E."/>
            <person name="Batalov S."/>
            <person name="Forrest A.R."/>
            <person name="Zavolan M."/>
            <person name="Davis M.J."/>
            <person name="Wilming L.G."/>
            <person name="Aidinis V."/>
            <person name="Allen J.E."/>
            <person name="Ambesi-Impiombato A."/>
            <person name="Apweiler R."/>
            <person name="Aturaliya R.N."/>
            <person name="Bailey T.L."/>
            <person name="Bansal M."/>
            <person name="Baxter L."/>
            <person name="Beisel K.W."/>
            <person name="Bersano T."/>
            <person name="Bono H."/>
            <person name="Chalk A.M."/>
            <person name="Chiu K.P."/>
            <person name="Choudhary V."/>
            <person name="Christoffels A."/>
            <person name="Clutterbuck D.R."/>
            <person name="Crowe M.L."/>
            <person name="Dalla E."/>
            <person name="Dalrymple B.P."/>
            <person name="de Bono B."/>
            <person name="Della Gatta G."/>
            <person name="di Bernardo D."/>
            <person name="Down T."/>
            <person name="Engstrom P."/>
            <person name="Fagiolini M."/>
            <person name="Faulkner G."/>
            <person name="Fletcher C.F."/>
            <person name="Fukushima T."/>
            <person name="Furuno M."/>
            <person name="Futaki S."/>
            <person name="Gariboldi M."/>
            <person name="Georgii-Hemming P."/>
            <person name="Gingeras T.R."/>
            <person name="Gojobori T."/>
            <person name="Green R.E."/>
            <person name="Gustincich S."/>
            <person name="Harbers M."/>
            <person name="Hayashi Y."/>
            <person name="Hensch T.K."/>
            <person name="Hirokawa N."/>
            <person name="Hill D."/>
            <person name="Huminiecki L."/>
            <person name="Iacono M."/>
            <person name="Ikeo K."/>
            <person name="Iwama A."/>
            <person name="Ishikawa T."/>
            <person name="Jakt M."/>
            <person name="Kanapin A."/>
            <person name="Katoh M."/>
            <person name="Kawasawa Y."/>
            <person name="Kelso J."/>
            <person name="Kitamura H."/>
            <person name="Kitano H."/>
            <person name="Kollias G."/>
            <person name="Krishnan S.P."/>
            <person name="Kruger A."/>
            <person name="Kummerfeld S.K."/>
            <person name="Kurochkin I.V."/>
            <person name="Lareau L.F."/>
            <person name="Lazarevic D."/>
            <person name="Lipovich L."/>
            <person name="Liu J."/>
            <person name="Liuni S."/>
            <person name="McWilliam S."/>
            <person name="Madan Babu M."/>
            <person name="Madera M."/>
            <person name="Marchionni L."/>
            <person name="Matsuda H."/>
            <person name="Matsuzawa S."/>
            <person name="Miki H."/>
            <person name="Mignone F."/>
            <person name="Miyake S."/>
            <person name="Morris K."/>
            <person name="Mottagui-Tabar S."/>
            <person name="Mulder N."/>
            <person name="Nakano N."/>
            <person name="Nakauchi H."/>
            <person name="Ng P."/>
            <person name="Nilsson R."/>
            <person name="Nishiguchi S."/>
            <person name="Nishikawa S."/>
            <person name="Nori F."/>
            <person name="Ohara O."/>
            <person name="Okazaki Y."/>
            <person name="Orlando V."/>
            <person name="Pang K.C."/>
            <person name="Pavan W.J."/>
            <person name="Pavesi G."/>
            <person name="Pesole G."/>
            <person name="Petrovsky N."/>
            <person name="Piazza S."/>
            <person name="Reed J."/>
            <person name="Reid J.F."/>
            <person name="Ring B.Z."/>
            <person name="Ringwald M."/>
            <person name="Rost B."/>
            <person name="Ruan Y."/>
            <person name="Salzberg S.L."/>
            <person name="Sandelin A."/>
            <person name="Schneider C."/>
            <person name="Schoenbach C."/>
            <person name="Sekiguchi K."/>
            <person name="Semple C.A."/>
            <person name="Seno S."/>
            <person name="Sessa L."/>
            <person name="Sheng Y."/>
            <person name="Shibata Y."/>
            <person name="Shimada H."/>
            <person name="Shimada K."/>
            <person name="Silva D."/>
            <person name="Sinclair B."/>
            <person name="Sperling S."/>
            <person name="Stupka E."/>
            <person name="Sugiura K."/>
            <person name="Sultana R."/>
            <person name="Takenaka Y."/>
            <person name="Taki K."/>
            <person name="Tammoja K."/>
            <person name="Tan S.L."/>
            <person name="Tang S."/>
            <person name="Taylor M.S."/>
            <person name="Tegner J."/>
            <person name="Teichmann S.A."/>
            <person name="Ueda H.R."/>
            <person name="van Nimwegen E."/>
            <person name="Verardo R."/>
            <person name="Wei C.L."/>
            <person name="Yagi K."/>
            <person name="Yamanishi H."/>
            <person name="Zabarovsky E."/>
            <person name="Zhu S."/>
            <person name="Zimmer A."/>
            <person name="Hide W."/>
            <person name="Bult C."/>
            <person name="Grimmond S.M."/>
            <person name="Teasdale R.D."/>
            <person name="Liu E.T."/>
            <person name="Brusic V."/>
            <person name="Quackenbush J."/>
            <person name="Wahlestedt C."/>
            <person name="Mattick J.S."/>
            <person name="Hume D.A."/>
            <person name="Kai C."/>
            <person name="Sasaki D."/>
            <person name="Tomaru Y."/>
            <person name="Fukuda S."/>
            <person name="Kanamori-Katayama M."/>
            <person name="Suzuki M."/>
            <person name="Aoki J."/>
            <person name="Arakawa T."/>
            <person name="Iida J."/>
            <person name="Imamura K."/>
            <person name="Itoh M."/>
            <person name="Kato T."/>
            <person name="Kawaji H."/>
            <person name="Kawagashira N."/>
            <person name="Kawashima T."/>
            <person name="Kojima M."/>
            <person name="Kondo S."/>
            <person name="Konno H."/>
            <person name="Nakano K."/>
            <person name="Ninomiya N."/>
            <person name="Nishio T."/>
            <person name="Okada M."/>
            <person name="Plessy C."/>
            <person name="Shibata K."/>
            <person name="Shiraki T."/>
            <person name="Suzuki S."/>
            <person name="Tagami M."/>
            <person name="Waki K."/>
            <person name="Watahiki A."/>
            <person name="Okamura-Oho Y."/>
            <person name="Suzuki H."/>
            <person name="Kawai J."/>
            <person name="Hayashizaki Y."/>
        </authorList>
    </citation>
    <scope>NUCLEOTIDE SEQUENCE [LARGE SCALE MRNA]</scope>
    <source>
        <strain>C57BL/6J</strain>
        <tissue>Head</tissue>
        <tissue>Skin</tissue>
    </source>
</reference>
<reference key="3">
    <citation type="journal article" date="2004" name="Genome Res.">
        <title>The status, quality, and expansion of the NIH full-length cDNA project: the Mammalian Gene Collection (MGC).</title>
        <authorList>
            <consortium name="The MGC Project Team"/>
        </authorList>
    </citation>
    <scope>NUCLEOTIDE SEQUENCE [LARGE SCALE MRNA]</scope>
    <source>
        <strain>FVB/N</strain>
        <tissue>Mammary gland</tissue>
    </source>
</reference>
<proteinExistence type="evidence at transcript level"/>
<evidence type="ECO:0000250" key="1"/>
<evidence type="ECO:0000250" key="2">
    <source>
        <dbReference type="UniProtKB" id="Q969P5"/>
    </source>
</evidence>
<sequence>MPFLGQDWRSPGQSWVKTADGWKRFLDEKSGSFVSDLSSYCNKEVYSKENLFSSLNYDVAAKKRKKDIQNSKTKTQYFHQEKWIYVHKGSTKERHGYCTLGEAFNRLDFSTAILDSRRFNYVVRLLELIAKSQLTSLSGIAQKNFMNILEKVVLKVLEDQQNIRLIRELLQTLYTSLCTLVQRVGKSVLVGNINMWVYRMETILHWQQQLNSIQISRPAFKGLTITDLPVCLQLNIMQRLSDGRDLVSLGQAAPDLHVLSEDRLLWKRLCQYHFSERQIRKRLILSDKGQLDWKKMYFKLVRCYPRREQYGVTLQLCKHCHILSWKGTDHPCTANNPESCSVSLSPQDFINLFKF</sequence>
<name>FBX32_MOUSE</name>